<accession>O70521</accession>
<gene>
    <name type="primary">Rgs19</name>
    <name type="synonym">Gaip</name>
</gene>
<proteinExistence type="evidence at protein level"/>
<keyword id="KW-0449">Lipoprotein</keyword>
<keyword id="KW-0472">Membrane</keyword>
<keyword id="KW-0564">Palmitate</keyword>
<keyword id="KW-0597">Phosphoprotein</keyword>
<keyword id="KW-1185">Reference proteome</keyword>
<keyword id="KW-0734">Signal transduction inhibitor</keyword>
<name>RGS19_RAT</name>
<sequence length="216" mass="24738">MPTPHEAEKQHTGPEEADRPPSMSSHDAAPSGPPSRNPCCLCWCCCCSCSWNQERQRAWQVSRESKLQPLPSCEVCTPPSPEEVQSWAQSFDKLMHSPTGRSVFRAFLRTEYSEENMLFWLACEELKTEADRHVVDEKARLIYEDYVSILSPKEVSLDSRVREGINRKMQEPSPHTFDDAQLQIYTLMHRDSYPRFLTSPTYRSLLLQGAPQSSEA</sequence>
<organism>
    <name type="scientific">Rattus norvegicus</name>
    <name type="common">Rat</name>
    <dbReference type="NCBI Taxonomy" id="10116"/>
    <lineage>
        <taxon>Eukaryota</taxon>
        <taxon>Metazoa</taxon>
        <taxon>Chordata</taxon>
        <taxon>Craniata</taxon>
        <taxon>Vertebrata</taxon>
        <taxon>Euteleostomi</taxon>
        <taxon>Mammalia</taxon>
        <taxon>Eutheria</taxon>
        <taxon>Euarchontoglires</taxon>
        <taxon>Glires</taxon>
        <taxon>Rodentia</taxon>
        <taxon>Myomorpha</taxon>
        <taxon>Muroidea</taxon>
        <taxon>Muridae</taxon>
        <taxon>Murinae</taxon>
        <taxon>Rattus</taxon>
    </lineage>
</organism>
<reference key="1">
    <citation type="journal article" date="1998" name="Mol. Biol. Cell">
        <title>RGS-GAIP, a GTPase-activating protein for Galphai heterotrimeric G proteins, is located on clathrin-coated vesicles.</title>
        <authorList>
            <person name="de Vries L."/>
            <person name="Elenko E."/>
            <person name="McCaffery J.M."/>
            <person name="Fischer T."/>
            <person name="Hubler L."/>
            <person name="McQuistan T."/>
            <person name="Watson N."/>
            <person name="Farquhar M.G."/>
        </authorList>
    </citation>
    <scope>NUCLEOTIDE SEQUENCE [MRNA]</scope>
    <source>
        <tissue>Pituitary</tissue>
    </source>
</reference>
<reference key="2">
    <citation type="journal article" date="2004" name="Genome Res.">
        <title>The status, quality, and expansion of the NIH full-length cDNA project: the Mammalian Gene Collection (MGC).</title>
        <authorList>
            <consortium name="The MGC Project Team"/>
        </authorList>
    </citation>
    <scope>NUCLEOTIDE SEQUENCE [LARGE SCALE MRNA]</scope>
    <source>
        <tissue>Spleen</tissue>
    </source>
</reference>
<reference key="3">
    <citation type="journal article" date="2000" name="Proc. Natl. Acad. Sci. U.S.A.">
        <title>Membrane-associated GAIP is a phosphoprotein and can be phosphorylated by clathrin-coated vesicles.</title>
        <authorList>
            <person name="Fischer T."/>
            <person name="Elenko E."/>
            <person name="Wan L."/>
            <person name="Thomas G."/>
            <person name="Farquhar M.G."/>
        </authorList>
    </citation>
    <scope>PHOSPHORYLATION AT SER-24</scope>
    <scope>MUTAGENESIS OF SER-24</scope>
</reference>
<feature type="chain" id="PRO_0000204231" description="Regulator of G-protein signaling 19">
    <location>
        <begin position="1"/>
        <end position="216"/>
    </location>
</feature>
<feature type="domain" description="RGS" evidence="3">
    <location>
        <begin position="90"/>
        <end position="206"/>
    </location>
</feature>
<feature type="region of interest" description="Disordered" evidence="4">
    <location>
        <begin position="1"/>
        <end position="30"/>
    </location>
</feature>
<feature type="region of interest" description="Interaction with GIPC">
    <location>
        <begin position="207"/>
        <end position="216"/>
    </location>
</feature>
<feature type="compositionally biased region" description="Basic and acidic residues" evidence="4">
    <location>
        <begin position="1"/>
        <end position="19"/>
    </location>
</feature>
<feature type="modified residue" description="Phosphoserine; by CK2" evidence="5">
    <location>
        <position position="24"/>
    </location>
</feature>
<feature type="modified residue" description="Phosphoserine" evidence="2">
    <location>
        <position position="97"/>
    </location>
</feature>
<feature type="modified residue" description="Phosphoserine; by MAPK1 and MAPK3" evidence="2">
    <location>
        <position position="151"/>
    </location>
</feature>
<feature type="mutagenesis site" description="50% reduction of phosphorylation." evidence="5">
    <original>S</original>
    <variation>A</variation>
    <location>
        <position position="24"/>
    </location>
</feature>
<evidence type="ECO:0000250" key="1"/>
<evidence type="ECO:0000250" key="2">
    <source>
        <dbReference type="UniProtKB" id="P49795"/>
    </source>
</evidence>
<evidence type="ECO:0000255" key="3">
    <source>
        <dbReference type="PROSITE-ProRule" id="PRU00171"/>
    </source>
</evidence>
<evidence type="ECO:0000256" key="4">
    <source>
        <dbReference type="SAM" id="MobiDB-lite"/>
    </source>
</evidence>
<evidence type="ECO:0000269" key="5">
    <source>
    </source>
</evidence>
<comment type="function">
    <text evidence="1">Inhibits signal transduction by increasing the GTPase activity of G protein alpha subunits thereby driving them into their inactive GDP-bound form. Binds to G-alpha subfamily 1 members, predominantly to G(i)-alpha-3. Activity on G(z)-alpha is inhibited by phosphorylation and palmitoylation of the G-protein (By similarity).</text>
</comment>
<comment type="subunit">
    <text evidence="2">Interacts with GIPC PDZ domain. Interacts with GNAO1.</text>
</comment>
<comment type="subcellular location">
    <subcellularLocation>
        <location evidence="1">Membrane</location>
        <topology evidence="1">Lipid-anchor</topology>
    </subcellularLocation>
</comment>
<comment type="PTM">
    <text evidence="1">Fatty acylated. Heavily palmitoylated in the cysteine string motif (By similarity).</text>
</comment>
<comment type="PTM">
    <text evidence="5">Phosphorylated, mainly on serine residues.</text>
</comment>
<protein>
    <recommendedName>
        <fullName>Regulator of G-protein signaling 19</fullName>
        <shortName>RGS19</shortName>
    </recommendedName>
    <alternativeName>
        <fullName>G-alpha-interacting protein</fullName>
        <shortName>GAIP</shortName>
    </alternativeName>
</protein>
<dbReference type="EMBL" id="AF068136">
    <property type="protein sequence ID" value="AAC19130.1"/>
    <property type="molecule type" value="mRNA"/>
</dbReference>
<dbReference type="EMBL" id="BC088141">
    <property type="protein sequence ID" value="AAH88141.1"/>
    <property type="molecule type" value="mRNA"/>
</dbReference>
<dbReference type="RefSeq" id="NP_001416042.1">
    <property type="nucleotide sequence ID" value="NM_001429113.1"/>
</dbReference>
<dbReference type="RefSeq" id="NP_067693.1">
    <property type="nucleotide sequence ID" value="NM_021661.3"/>
</dbReference>
<dbReference type="RefSeq" id="XP_006235863.2">
    <property type="nucleotide sequence ID" value="XM_006235801.3"/>
</dbReference>
<dbReference type="SMR" id="O70521"/>
<dbReference type="BioGRID" id="248744">
    <property type="interactions" value="1"/>
</dbReference>
<dbReference type="FunCoup" id="O70521">
    <property type="interactions" value="721"/>
</dbReference>
<dbReference type="MINT" id="O70521"/>
<dbReference type="STRING" id="10116.ENSRNOP00000022451"/>
<dbReference type="iPTMnet" id="O70521"/>
<dbReference type="PhosphoSitePlus" id="O70521"/>
<dbReference type="PaxDb" id="10116-ENSRNOP00000022451"/>
<dbReference type="Ensembl" id="ENSRNOT00000022451.5">
    <property type="protein sequence ID" value="ENSRNOP00000022451.4"/>
    <property type="gene ID" value="ENSRNOG00000016547.6"/>
</dbReference>
<dbReference type="GeneID" id="59293"/>
<dbReference type="KEGG" id="rno:59293"/>
<dbReference type="UCSC" id="RGD:629471">
    <property type="organism name" value="rat"/>
</dbReference>
<dbReference type="AGR" id="RGD:629471"/>
<dbReference type="CTD" id="10287"/>
<dbReference type="RGD" id="629471">
    <property type="gene designation" value="Rgs19"/>
</dbReference>
<dbReference type="eggNOG" id="KOG3589">
    <property type="taxonomic scope" value="Eukaryota"/>
</dbReference>
<dbReference type="GeneTree" id="ENSGT00940000160391"/>
<dbReference type="HOGENOM" id="CLU_059863_0_2_1"/>
<dbReference type="InParanoid" id="O70521"/>
<dbReference type="OMA" id="EANQHMV"/>
<dbReference type="OrthoDB" id="10266999at2759"/>
<dbReference type="PhylomeDB" id="O70521"/>
<dbReference type="Reactome" id="R-RNO-416476">
    <property type="pathway name" value="G alpha (q) signalling events"/>
</dbReference>
<dbReference type="Reactome" id="R-RNO-418594">
    <property type="pathway name" value="G alpha (i) signalling events"/>
</dbReference>
<dbReference type="PRO" id="PR:O70521"/>
<dbReference type="Proteomes" id="UP000002494">
    <property type="component" value="Chromosome 3"/>
</dbReference>
<dbReference type="Bgee" id="ENSRNOG00000016547">
    <property type="expression patterns" value="Expressed in spleen and 19 other cell types or tissues"/>
</dbReference>
<dbReference type="GO" id="GO:0005903">
    <property type="term" value="C:brush border"/>
    <property type="evidence" value="ECO:0000314"/>
    <property type="project" value="RGD"/>
</dbReference>
<dbReference type="GO" id="GO:0030136">
    <property type="term" value="C:clathrin-coated vesicle"/>
    <property type="evidence" value="ECO:0000314"/>
    <property type="project" value="RGD"/>
</dbReference>
<dbReference type="GO" id="GO:0005737">
    <property type="term" value="C:cytoplasm"/>
    <property type="evidence" value="ECO:0000266"/>
    <property type="project" value="RGD"/>
</dbReference>
<dbReference type="GO" id="GO:0005829">
    <property type="term" value="C:cytosol"/>
    <property type="evidence" value="ECO:0000266"/>
    <property type="project" value="RGD"/>
</dbReference>
<dbReference type="GO" id="GO:0043198">
    <property type="term" value="C:dendritic shaft"/>
    <property type="evidence" value="ECO:0000266"/>
    <property type="project" value="RGD"/>
</dbReference>
<dbReference type="GO" id="GO:0043197">
    <property type="term" value="C:dendritic spine"/>
    <property type="evidence" value="ECO:0000266"/>
    <property type="project" value="RGD"/>
</dbReference>
<dbReference type="GO" id="GO:0098978">
    <property type="term" value="C:glutamatergic synapse"/>
    <property type="evidence" value="ECO:0000266"/>
    <property type="project" value="RGD"/>
</dbReference>
<dbReference type="GO" id="GO:0000139">
    <property type="term" value="C:Golgi membrane"/>
    <property type="evidence" value="ECO:0000304"/>
    <property type="project" value="RGD"/>
</dbReference>
<dbReference type="GO" id="GO:0016020">
    <property type="term" value="C:membrane"/>
    <property type="evidence" value="ECO:0000266"/>
    <property type="project" value="RGD"/>
</dbReference>
<dbReference type="GO" id="GO:0098685">
    <property type="term" value="C:Schaffer collateral - CA1 synapse"/>
    <property type="evidence" value="ECO:0000266"/>
    <property type="project" value="RGD"/>
</dbReference>
<dbReference type="GO" id="GO:0008021">
    <property type="term" value="C:synaptic vesicle"/>
    <property type="evidence" value="ECO:0000266"/>
    <property type="project" value="RGD"/>
</dbReference>
<dbReference type="GO" id="GO:0012506">
    <property type="term" value="C:vesicle membrane"/>
    <property type="evidence" value="ECO:0000266"/>
    <property type="project" value="RGD"/>
</dbReference>
<dbReference type="GO" id="GO:0003779">
    <property type="term" value="F:actin binding"/>
    <property type="evidence" value="ECO:0000266"/>
    <property type="project" value="RGD"/>
</dbReference>
<dbReference type="GO" id="GO:0001965">
    <property type="term" value="F:G-protein alpha-subunit binding"/>
    <property type="evidence" value="ECO:0000314"/>
    <property type="project" value="RGD"/>
</dbReference>
<dbReference type="GO" id="GO:0005096">
    <property type="term" value="F:GTPase activator activity"/>
    <property type="evidence" value="ECO:0000304"/>
    <property type="project" value="RGD"/>
</dbReference>
<dbReference type="GO" id="GO:0042802">
    <property type="term" value="F:identical protein binding"/>
    <property type="evidence" value="ECO:0000266"/>
    <property type="project" value="RGD"/>
</dbReference>
<dbReference type="GO" id="GO:0017022">
    <property type="term" value="F:myosin binding"/>
    <property type="evidence" value="ECO:0000266"/>
    <property type="project" value="RGD"/>
</dbReference>
<dbReference type="GO" id="GO:0098761">
    <property type="term" value="P:cellular response to interleukin-7"/>
    <property type="evidence" value="ECO:0000266"/>
    <property type="project" value="RGD"/>
</dbReference>
<dbReference type="GO" id="GO:0007268">
    <property type="term" value="P:chemical synaptic transmission"/>
    <property type="evidence" value="ECO:0000266"/>
    <property type="project" value="RGD"/>
</dbReference>
<dbReference type="GO" id="GO:0043542">
    <property type="term" value="P:endothelial cell migration"/>
    <property type="evidence" value="ECO:0000266"/>
    <property type="project" value="RGD"/>
</dbReference>
<dbReference type="GO" id="GO:0014047">
    <property type="term" value="P:glutamate secretion"/>
    <property type="evidence" value="ECO:0000266"/>
    <property type="project" value="RGD"/>
</dbReference>
<dbReference type="GO" id="GO:0032435">
    <property type="term" value="P:negative regulation of proteasomal ubiquitin-dependent protein catabolic process"/>
    <property type="evidence" value="ECO:0000266"/>
    <property type="project" value="RGD"/>
</dbReference>
<dbReference type="GO" id="GO:0009968">
    <property type="term" value="P:negative regulation of signal transduction"/>
    <property type="evidence" value="ECO:0007669"/>
    <property type="project" value="UniProtKB-KW"/>
</dbReference>
<dbReference type="GO" id="GO:0030511">
    <property type="term" value="P:positive regulation of transforming growth factor beta receptor signaling pathway"/>
    <property type="evidence" value="ECO:0000266"/>
    <property type="project" value="RGD"/>
</dbReference>
<dbReference type="GO" id="GO:0099171">
    <property type="term" value="P:presynaptic modulation of chemical synaptic transmission"/>
    <property type="evidence" value="ECO:0000266"/>
    <property type="project" value="RGD"/>
</dbReference>
<dbReference type="GO" id="GO:0006605">
    <property type="term" value="P:protein targeting"/>
    <property type="evidence" value="ECO:0000266"/>
    <property type="project" value="RGD"/>
</dbReference>
<dbReference type="GO" id="GO:0008277">
    <property type="term" value="P:regulation of G protein-coupled receptor signaling pathway"/>
    <property type="evidence" value="ECO:0000304"/>
    <property type="project" value="RGD"/>
</dbReference>
<dbReference type="GO" id="GO:0031647">
    <property type="term" value="P:regulation of protein stability"/>
    <property type="evidence" value="ECO:0000266"/>
    <property type="project" value="RGD"/>
</dbReference>
<dbReference type="GO" id="GO:0048167">
    <property type="term" value="P:regulation of synaptic plasticity"/>
    <property type="evidence" value="ECO:0000266"/>
    <property type="project" value="RGD"/>
</dbReference>
<dbReference type="GO" id="GO:0045471">
    <property type="term" value="P:response to ethanol"/>
    <property type="evidence" value="ECO:0000270"/>
    <property type="project" value="RGD"/>
</dbReference>
<dbReference type="FunFam" id="1.10.167.10:FF:000001">
    <property type="entry name" value="Putative regulator of g-protein signaling 12"/>
    <property type="match status" value="1"/>
</dbReference>
<dbReference type="FunFam" id="1.10.196.10:FF:000001">
    <property type="entry name" value="Regulator of G-protein signaling 8"/>
    <property type="match status" value="1"/>
</dbReference>
<dbReference type="Gene3D" id="1.10.196.10">
    <property type="match status" value="2"/>
</dbReference>
<dbReference type="Gene3D" id="1.10.167.10">
    <property type="entry name" value="Regulator of G-protein Signalling 4, domain 2"/>
    <property type="match status" value="1"/>
</dbReference>
<dbReference type="InterPro" id="IPR016137">
    <property type="entry name" value="RGS"/>
</dbReference>
<dbReference type="InterPro" id="IPR036305">
    <property type="entry name" value="RGS_sf"/>
</dbReference>
<dbReference type="InterPro" id="IPR024066">
    <property type="entry name" value="RGS_subdom1/3"/>
</dbReference>
<dbReference type="InterPro" id="IPR044926">
    <property type="entry name" value="RGS_subdomain_2"/>
</dbReference>
<dbReference type="PANTHER" id="PTHR10845">
    <property type="entry name" value="REGULATOR OF G PROTEIN SIGNALING"/>
    <property type="match status" value="1"/>
</dbReference>
<dbReference type="PANTHER" id="PTHR10845:SF145">
    <property type="entry name" value="REGULATOR OF G-PROTEIN SIGNALING 19"/>
    <property type="match status" value="1"/>
</dbReference>
<dbReference type="Pfam" id="PF00615">
    <property type="entry name" value="RGS"/>
    <property type="match status" value="1"/>
</dbReference>
<dbReference type="PRINTS" id="PR01301">
    <property type="entry name" value="RGSPROTEIN"/>
</dbReference>
<dbReference type="SMART" id="SM00315">
    <property type="entry name" value="RGS"/>
    <property type="match status" value="1"/>
</dbReference>
<dbReference type="SUPFAM" id="SSF48097">
    <property type="entry name" value="Regulator of G-protein signaling, RGS"/>
    <property type="match status" value="1"/>
</dbReference>
<dbReference type="PROSITE" id="PS50132">
    <property type="entry name" value="RGS"/>
    <property type="match status" value="1"/>
</dbReference>